<evidence type="ECO:0000255" key="1">
    <source>
        <dbReference type="HAMAP-Rule" id="MF_01210"/>
    </source>
</evidence>
<dbReference type="EC" id="6.3.4.16" evidence="1"/>
<dbReference type="EC" id="6.3.5.5" evidence="1"/>
<dbReference type="EMBL" id="BA000036">
    <property type="protein sequence ID" value="BAB99002.1"/>
    <property type="molecule type" value="Genomic_DNA"/>
</dbReference>
<dbReference type="EMBL" id="BX927152">
    <property type="protein sequence ID" value="CAF21618.1"/>
    <property type="molecule type" value="Genomic_DNA"/>
</dbReference>
<dbReference type="RefSeq" id="NP_600823.1">
    <property type="nucleotide sequence ID" value="NC_003450.3"/>
</dbReference>
<dbReference type="RefSeq" id="WP_003862217.1">
    <property type="nucleotide sequence ID" value="NC_006958.1"/>
</dbReference>
<dbReference type="SMR" id="P58939"/>
<dbReference type="STRING" id="196627.cg1813"/>
<dbReference type="GeneID" id="1019577"/>
<dbReference type="KEGG" id="cgb:cg1813"/>
<dbReference type="KEGG" id="cgl:Cgl1609"/>
<dbReference type="PATRIC" id="fig|196627.13.peg.1571"/>
<dbReference type="eggNOG" id="COG0458">
    <property type="taxonomic scope" value="Bacteria"/>
</dbReference>
<dbReference type="HOGENOM" id="CLU_000513_1_0_11"/>
<dbReference type="OrthoDB" id="9804197at2"/>
<dbReference type="BioCyc" id="CORYNE:G18NG-11194-MONOMER"/>
<dbReference type="UniPathway" id="UPA00068">
    <property type="reaction ID" value="UER00171"/>
</dbReference>
<dbReference type="UniPathway" id="UPA00070">
    <property type="reaction ID" value="UER00115"/>
</dbReference>
<dbReference type="Proteomes" id="UP000000582">
    <property type="component" value="Chromosome"/>
</dbReference>
<dbReference type="Proteomes" id="UP000001009">
    <property type="component" value="Chromosome"/>
</dbReference>
<dbReference type="GO" id="GO:0005737">
    <property type="term" value="C:cytoplasm"/>
    <property type="evidence" value="ECO:0007669"/>
    <property type="project" value="TreeGrafter"/>
</dbReference>
<dbReference type="GO" id="GO:0005524">
    <property type="term" value="F:ATP binding"/>
    <property type="evidence" value="ECO:0007669"/>
    <property type="project" value="UniProtKB-UniRule"/>
</dbReference>
<dbReference type="GO" id="GO:0004087">
    <property type="term" value="F:carbamoyl-phosphate synthase (ammonia) activity"/>
    <property type="evidence" value="ECO:0007669"/>
    <property type="project" value="RHEA"/>
</dbReference>
<dbReference type="GO" id="GO:0004088">
    <property type="term" value="F:carbamoyl-phosphate synthase (glutamine-hydrolyzing) activity"/>
    <property type="evidence" value="ECO:0007669"/>
    <property type="project" value="UniProtKB-UniRule"/>
</dbReference>
<dbReference type="GO" id="GO:0046872">
    <property type="term" value="F:metal ion binding"/>
    <property type="evidence" value="ECO:0007669"/>
    <property type="project" value="UniProtKB-KW"/>
</dbReference>
<dbReference type="GO" id="GO:0044205">
    <property type="term" value="P:'de novo' UMP biosynthetic process"/>
    <property type="evidence" value="ECO:0007669"/>
    <property type="project" value="UniProtKB-UniRule"/>
</dbReference>
<dbReference type="GO" id="GO:0006541">
    <property type="term" value="P:glutamine metabolic process"/>
    <property type="evidence" value="ECO:0007669"/>
    <property type="project" value="TreeGrafter"/>
</dbReference>
<dbReference type="GO" id="GO:0006526">
    <property type="term" value="P:L-arginine biosynthetic process"/>
    <property type="evidence" value="ECO:0007669"/>
    <property type="project" value="UniProtKB-UniRule"/>
</dbReference>
<dbReference type="CDD" id="cd01424">
    <property type="entry name" value="MGS_CPS_II"/>
    <property type="match status" value="1"/>
</dbReference>
<dbReference type="FunFam" id="1.10.1030.10:FF:000002">
    <property type="entry name" value="Carbamoyl-phosphate synthase large chain"/>
    <property type="match status" value="1"/>
</dbReference>
<dbReference type="FunFam" id="3.30.1490.20:FF:000001">
    <property type="entry name" value="Carbamoyl-phosphate synthase large chain"/>
    <property type="match status" value="1"/>
</dbReference>
<dbReference type="FunFam" id="3.30.470.20:FF:000007">
    <property type="entry name" value="Carbamoyl-phosphate synthase large chain"/>
    <property type="match status" value="1"/>
</dbReference>
<dbReference type="FunFam" id="3.30.470.20:FF:000014">
    <property type="entry name" value="Carbamoyl-phosphate synthase large chain"/>
    <property type="match status" value="1"/>
</dbReference>
<dbReference type="FunFam" id="3.40.50.20:FF:000001">
    <property type="entry name" value="Carbamoyl-phosphate synthase large chain"/>
    <property type="match status" value="1"/>
</dbReference>
<dbReference type="FunFam" id="3.40.50.20:FF:000003">
    <property type="entry name" value="Carbamoyl-phosphate synthase large chain"/>
    <property type="match status" value="1"/>
</dbReference>
<dbReference type="Gene3D" id="3.40.50.20">
    <property type="match status" value="2"/>
</dbReference>
<dbReference type="Gene3D" id="3.30.1490.20">
    <property type="entry name" value="ATP-grasp fold, A domain"/>
    <property type="match status" value="1"/>
</dbReference>
<dbReference type="Gene3D" id="3.30.470.20">
    <property type="entry name" value="ATP-grasp fold, B domain"/>
    <property type="match status" value="2"/>
</dbReference>
<dbReference type="Gene3D" id="1.10.1030.10">
    <property type="entry name" value="Carbamoyl-phosphate synthetase, large subunit oligomerisation domain"/>
    <property type="match status" value="1"/>
</dbReference>
<dbReference type="Gene3D" id="3.40.50.1380">
    <property type="entry name" value="Methylglyoxal synthase-like domain"/>
    <property type="match status" value="1"/>
</dbReference>
<dbReference type="HAMAP" id="MF_01210_B">
    <property type="entry name" value="CPSase_L_chain_B"/>
    <property type="match status" value="1"/>
</dbReference>
<dbReference type="InterPro" id="IPR011761">
    <property type="entry name" value="ATP-grasp"/>
</dbReference>
<dbReference type="InterPro" id="IPR013815">
    <property type="entry name" value="ATP_grasp_subdomain_1"/>
</dbReference>
<dbReference type="InterPro" id="IPR006275">
    <property type="entry name" value="CarbamoylP_synth_lsu"/>
</dbReference>
<dbReference type="InterPro" id="IPR005480">
    <property type="entry name" value="CarbamoylP_synth_lsu_oligo"/>
</dbReference>
<dbReference type="InterPro" id="IPR036897">
    <property type="entry name" value="CarbamoylP_synth_lsu_oligo_sf"/>
</dbReference>
<dbReference type="InterPro" id="IPR005479">
    <property type="entry name" value="CbamoylP_synth_lsu-like_ATP-bd"/>
</dbReference>
<dbReference type="InterPro" id="IPR005483">
    <property type="entry name" value="CbamoylP_synth_lsu_CPSase_dom"/>
</dbReference>
<dbReference type="InterPro" id="IPR011607">
    <property type="entry name" value="MGS-like_dom"/>
</dbReference>
<dbReference type="InterPro" id="IPR036914">
    <property type="entry name" value="MGS-like_dom_sf"/>
</dbReference>
<dbReference type="InterPro" id="IPR033937">
    <property type="entry name" value="MGS_CPS_CarB"/>
</dbReference>
<dbReference type="InterPro" id="IPR016185">
    <property type="entry name" value="PreATP-grasp_dom_sf"/>
</dbReference>
<dbReference type="NCBIfam" id="TIGR01369">
    <property type="entry name" value="CPSaseII_lrg"/>
    <property type="match status" value="1"/>
</dbReference>
<dbReference type="NCBIfam" id="NF003671">
    <property type="entry name" value="PRK05294.1"/>
    <property type="match status" value="1"/>
</dbReference>
<dbReference type="NCBIfam" id="NF009455">
    <property type="entry name" value="PRK12815.1"/>
    <property type="match status" value="1"/>
</dbReference>
<dbReference type="PANTHER" id="PTHR11405:SF53">
    <property type="entry name" value="CARBAMOYL-PHOSPHATE SYNTHASE [AMMONIA], MITOCHONDRIAL"/>
    <property type="match status" value="1"/>
</dbReference>
<dbReference type="PANTHER" id="PTHR11405">
    <property type="entry name" value="CARBAMOYLTRANSFERASE FAMILY MEMBER"/>
    <property type="match status" value="1"/>
</dbReference>
<dbReference type="Pfam" id="PF02786">
    <property type="entry name" value="CPSase_L_D2"/>
    <property type="match status" value="2"/>
</dbReference>
<dbReference type="Pfam" id="PF02787">
    <property type="entry name" value="CPSase_L_D3"/>
    <property type="match status" value="1"/>
</dbReference>
<dbReference type="Pfam" id="PF02142">
    <property type="entry name" value="MGS"/>
    <property type="match status" value="1"/>
</dbReference>
<dbReference type="PRINTS" id="PR00098">
    <property type="entry name" value="CPSASE"/>
</dbReference>
<dbReference type="SMART" id="SM01096">
    <property type="entry name" value="CPSase_L_D3"/>
    <property type="match status" value="1"/>
</dbReference>
<dbReference type="SMART" id="SM00851">
    <property type="entry name" value="MGS"/>
    <property type="match status" value="1"/>
</dbReference>
<dbReference type="SUPFAM" id="SSF48108">
    <property type="entry name" value="Carbamoyl phosphate synthetase, large subunit connection domain"/>
    <property type="match status" value="1"/>
</dbReference>
<dbReference type="SUPFAM" id="SSF56059">
    <property type="entry name" value="Glutathione synthetase ATP-binding domain-like"/>
    <property type="match status" value="2"/>
</dbReference>
<dbReference type="SUPFAM" id="SSF52335">
    <property type="entry name" value="Methylglyoxal synthase-like"/>
    <property type="match status" value="1"/>
</dbReference>
<dbReference type="SUPFAM" id="SSF52440">
    <property type="entry name" value="PreATP-grasp domain"/>
    <property type="match status" value="2"/>
</dbReference>
<dbReference type="PROSITE" id="PS50975">
    <property type="entry name" value="ATP_GRASP"/>
    <property type="match status" value="2"/>
</dbReference>
<dbReference type="PROSITE" id="PS00866">
    <property type="entry name" value="CPSASE_1"/>
    <property type="match status" value="1"/>
</dbReference>
<dbReference type="PROSITE" id="PS00867">
    <property type="entry name" value="CPSASE_2"/>
    <property type="match status" value="1"/>
</dbReference>
<dbReference type="PROSITE" id="PS51855">
    <property type="entry name" value="MGS"/>
    <property type="match status" value="1"/>
</dbReference>
<feature type="chain" id="PRO_0000145000" description="Carbamoyl phosphate synthase large chain">
    <location>
        <begin position="1"/>
        <end position="1113"/>
    </location>
</feature>
<feature type="domain" description="ATP-grasp 1" evidence="1">
    <location>
        <begin position="138"/>
        <end position="333"/>
    </location>
</feature>
<feature type="domain" description="ATP-grasp 2" evidence="1">
    <location>
        <begin position="695"/>
        <end position="886"/>
    </location>
</feature>
<feature type="domain" description="MGS-like" evidence="1">
    <location>
        <begin position="968"/>
        <end position="1113"/>
    </location>
</feature>
<feature type="region of interest" description="Carboxyphosphate synthetic domain" evidence="1">
    <location>
        <begin position="1"/>
        <end position="407"/>
    </location>
</feature>
<feature type="region of interest" description="Oligomerization domain" evidence="1">
    <location>
        <begin position="408"/>
        <end position="565"/>
    </location>
</feature>
<feature type="region of interest" description="Carbamoyl phosphate synthetic domain" evidence="1">
    <location>
        <begin position="566"/>
        <end position="967"/>
    </location>
</feature>
<feature type="region of interest" description="Allosteric domain" evidence="1">
    <location>
        <begin position="968"/>
        <end position="1113"/>
    </location>
</feature>
<feature type="binding site" evidence="1">
    <location>
        <position position="134"/>
    </location>
    <ligand>
        <name>ATP</name>
        <dbReference type="ChEBI" id="CHEBI:30616"/>
        <label>1</label>
    </ligand>
</feature>
<feature type="binding site" evidence="1">
    <location>
        <position position="174"/>
    </location>
    <ligand>
        <name>ATP</name>
        <dbReference type="ChEBI" id="CHEBI:30616"/>
        <label>1</label>
    </ligand>
</feature>
<feature type="binding site" evidence="1">
    <location>
        <position position="180"/>
    </location>
    <ligand>
        <name>ATP</name>
        <dbReference type="ChEBI" id="CHEBI:30616"/>
        <label>1</label>
    </ligand>
</feature>
<feature type="binding site" evidence="1">
    <location>
        <position position="181"/>
    </location>
    <ligand>
        <name>ATP</name>
        <dbReference type="ChEBI" id="CHEBI:30616"/>
        <label>1</label>
    </ligand>
</feature>
<feature type="binding site" evidence="1">
    <location>
        <position position="213"/>
    </location>
    <ligand>
        <name>ATP</name>
        <dbReference type="ChEBI" id="CHEBI:30616"/>
        <label>1</label>
    </ligand>
</feature>
<feature type="binding site" evidence="1">
    <location>
        <position position="215"/>
    </location>
    <ligand>
        <name>ATP</name>
        <dbReference type="ChEBI" id="CHEBI:30616"/>
        <label>1</label>
    </ligand>
</feature>
<feature type="binding site" evidence="1">
    <location>
        <position position="220"/>
    </location>
    <ligand>
        <name>ATP</name>
        <dbReference type="ChEBI" id="CHEBI:30616"/>
        <label>1</label>
    </ligand>
</feature>
<feature type="binding site" evidence="1">
    <location>
        <position position="246"/>
    </location>
    <ligand>
        <name>ATP</name>
        <dbReference type="ChEBI" id="CHEBI:30616"/>
        <label>1</label>
    </ligand>
</feature>
<feature type="binding site" evidence="1">
    <location>
        <position position="247"/>
    </location>
    <ligand>
        <name>ATP</name>
        <dbReference type="ChEBI" id="CHEBI:30616"/>
        <label>1</label>
    </ligand>
</feature>
<feature type="binding site" evidence="1">
    <location>
        <position position="248"/>
    </location>
    <ligand>
        <name>ATP</name>
        <dbReference type="ChEBI" id="CHEBI:30616"/>
        <label>1</label>
    </ligand>
</feature>
<feature type="binding site" evidence="1">
    <location>
        <position position="290"/>
    </location>
    <ligand>
        <name>ATP</name>
        <dbReference type="ChEBI" id="CHEBI:30616"/>
        <label>1</label>
    </ligand>
</feature>
<feature type="binding site" evidence="1">
    <location>
        <position position="290"/>
    </location>
    <ligand>
        <name>Mg(2+)</name>
        <dbReference type="ChEBI" id="CHEBI:18420"/>
        <label>1</label>
    </ligand>
</feature>
<feature type="binding site" evidence="1">
    <location>
        <position position="290"/>
    </location>
    <ligand>
        <name>Mn(2+)</name>
        <dbReference type="ChEBI" id="CHEBI:29035"/>
        <label>1</label>
    </ligand>
</feature>
<feature type="binding site" evidence="1">
    <location>
        <position position="304"/>
    </location>
    <ligand>
        <name>ATP</name>
        <dbReference type="ChEBI" id="CHEBI:30616"/>
        <label>1</label>
    </ligand>
</feature>
<feature type="binding site" evidence="1">
    <location>
        <position position="304"/>
    </location>
    <ligand>
        <name>Mg(2+)</name>
        <dbReference type="ChEBI" id="CHEBI:18420"/>
        <label>1</label>
    </ligand>
</feature>
<feature type="binding site" evidence="1">
    <location>
        <position position="304"/>
    </location>
    <ligand>
        <name>Mg(2+)</name>
        <dbReference type="ChEBI" id="CHEBI:18420"/>
        <label>2</label>
    </ligand>
</feature>
<feature type="binding site" evidence="1">
    <location>
        <position position="304"/>
    </location>
    <ligand>
        <name>Mn(2+)</name>
        <dbReference type="ChEBI" id="CHEBI:29035"/>
        <label>1</label>
    </ligand>
</feature>
<feature type="binding site" evidence="1">
    <location>
        <position position="304"/>
    </location>
    <ligand>
        <name>Mn(2+)</name>
        <dbReference type="ChEBI" id="CHEBI:29035"/>
        <label>2</label>
    </ligand>
</feature>
<feature type="binding site" evidence="1">
    <location>
        <position position="306"/>
    </location>
    <ligand>
        <name>Mg(2+)</name>
        <dbReference type="ChEBI" id="CHEBI:18420"/>
        <label>2</label>
    </ligand>
</feature>
<feature type="binding site" evidence="1">
    <location>
        <position position="306"/>
    </location>
    <ligand>
        <name>Mn(2+)</name>
        <dbReference type="ChEBI" id="CHEBI:29035"/>
        <label>2</label>
    </ligand>
</feature>
<feature type="binding site" evidence="1">
    <location>
        <position position="731"/>
    </location>
    <ligand>
        <name>ATP</name>
        <dbReference type="ChEBI" id="CHEBI:30616"/>
        <label>2</label>
    </ligand>
</feature>
<feature type="binding site" evidence="1">
    <location>
        <position position="770"/>
    </location>
    <ligand>
        <name>ATP</name>
        <dbReference type="ChEBI" id="CHEBI:30616"/>
        <label>2</label>
    </ligand>
</feature>
<feature type="binding site" evidence="1">
    <location>
        <position position="772"/>
    </location>
    <ligand>
        <name>ATP</name>
        <dbReference type="ChEBI" id="CHEBI:30616"/>
        <label>2</label>
    </ligand>
</feature>
<feature type="binding site" evidence="1">
    <location>
        <position position="777"/>
    </location>
    <ligand>
        <name>ATP</name>
        <dbReference type="ChEBI" id="CHEBI:30616"/>
        <label>2</label>
    </ligand>
</feature>
<feature type="binding site" evidence="1">
    <location>
        <position position="802"/>
    </location>
    <ligand>
        <name>ATP</name>
        <dbReference type="ChEBI" id="CHEBI:30616"/>
        <label>2</label>
    </ligand>
</feature>
<feature type="binding site" evidence="1">
    <location>
        <position position="803"/>
    </location>
    <ligand>
        <name>ATP</name>
        <dbReference type="ChEBI" id="CHEBI:30616"/>
        <label>2</label>
    </ligand>
</feature>
<feature type="binding site" evidence="1">
    <location>
        <position position="804"/>
    </location>
    <ligand>
        <name>ATP</name>
        <dbReference type="ChEBI" id="CHEBI:30616"/>
        <label>2</label>
    </ligand>
</feature>
<feature type="binding site" evidence="1">
    <location>
        <position position="805"/>
    </location>
    <ligand>
        <name>ATP</name>
        <dbReference type="ChEBI" id="CHEBI:30616"/>
        <label>2</label>
    </ligand>
</feature>
<feature type="binding site" evidence="1">
    <location>
        <position position="845"/>
    </location>
    <ligand>
        <name>ATP</name>
        <dbReference type="ChEBI" id="CHEBI:30616"/>
        <label>2</label>
    </ligand>
</feature>
<feature type="binding site" evidence="1">
    <location>
        <position position="845"/>
    </location>
    <ligand>
        <name>Mg(2+)</name>
        <dbReference type="ChEBI" id="CHEBI:18420"/>
        <label>3</label>
    </ligand>
</feature>
<feature type="binding site" evidence="1">
    <location>
        <position position="845"/>
    </location>
    <ligand>
        <name>Mn(2+)</name>
        <dbReference type="ChEBI" id="CHEBI:29035"/>
        <label>3</label>
    </ligand>
</feature>
<feature type="binding site" evidence="1">
    <location>
        <position position="857"/>
    </location>
    <ligand>
        <name>ATP</name>
        <dbReference type="ChEBI" id="CHEBI:30616"/>
        <label>2</label>
    </ligand>
</feature>
<feature type="binding site" evidence="1">
    <location>
        <position position="857"/>
    </location>
    <ligand>
        <name>Mg(2+)</name>
        <dbReference type="ChEBI" id="CHEBI:18420"/>
        <label>3</label>
    </ligand>
</feature>
<feature type="binding site" evidence="1">
    <location>
        <position position="857"/>
    </location>
    <ligand>
        <name>Mg(2+)</name>
        <dbReference type="ChEBI" id="CHEBI:18420"/>
        <label>4</label>
    </ligand>
</feature>
<feature type="binding site" evidence="1">
    <location>
        <position position="857"/>
    </location>
    <ligand>
        <name>Mn(2+)</name>
        <dbReference type="ChEBI" id="CHEBI:29035"/>
        <label>3</label>
    </ligand>
</feature>
<feature type="binding site" evidence="1">
    <location>
        <position position="857"/>
    </location>
    <ligand>
        <name>Mn(2+)</name>
        <dbReference type="ChEBI" id="CHEBI:29035"/>
        <label>4</label>
    </ligand>
</feature>
<feature type="binding site" evidence="1">
    <location>
        <position position="859"/>
    </location>
    <ligand>
        <name>Mg(2+)</name>
        <dbReference type="ChEBI" id="CHEBI:18420"/>
        <label>4</label>
    </ligand>
</feature>
<feature type="binding site" evidence="1">
    <location>
        <position position="859"/>
    </location>
    <ligand>
        <name>Mn(2+)</name>
        <dbReference type="ChEBI" id="CHEBI:29035"/>
        <label>4</label>
    </ligand>
</feature>
<gene>
    <name evidence="1" type="primary">carB</name>
    <name type="ordered locus">Cgl1609</name>
    <name type="ordered locus">cg1813</name>
</gene>
<accession>P58939</accession>
<comment type="function">
    <text evidence="1">Large subunit of the glutamine-dependent carbamoyl phosphate synthetase (CPSase). CPSase catalyzes the formation of carbamoyl phosphate from the ammonia moiety of glutamine, carbonate, and phosphate donated by ATP, constituting the first step of 2 biosynthetic pathways, one leading to arginine and/or urea and the other to pyrimidine nucleotides. The large subunit (synthetase) binds the substrates ammonia (free or transferred from glutamine from the small subunit), hydrogencarbonate and ATP and carries out an ATP-coupled ligase reaction, activating hydrogencarbonate by forming carboxy phosphate which reacts with ammonia to form carbamoyl phosphate.</text>
</comment>
<comment type="catalytic activity">
    <reaction evidence="1">
        <text>hydrogencarbonate + L-glutamine + 2 ATP + H2O = carbamoyl phosphate + L-glutamate + 2 ADP + phosphate + 2 H(+)</text>
        <dbReference type="Rhea" id="RHEA:18633"/>
        <dbReference type="ChEBI" id="CHEBI:15377"/>
        <dbReference type="ChEBI" id="CHEBI:15378"/>
        <dbReference type="ChEBI" id="CHEBI:17544"/>
        <dbReference type="ChEBI" id="CHEBI:29985"/>
        <dbReference type="ChEBI" id="CHEBI:30616"/>
        <dbReference type="ChEBI" id="CHEBI:43474"/>
        <dbReference type="ChEBI" id="CHEBI:58228"/>
        <dbReference type="ChEBI" id="CHEBI:58359"/>
        <dbReference type="ChEBI" id="CHEBI:456216"/>
        <dbReference type="EC" id="6.3.5.5"/>
    </reaction>
</comment>
<comment type="catalytic activity">
    <molecule>Carbamoyl phosphate synthase large chain</molecule>
    <reaction evidence="1">
        <text>hydrogencarbonate + NH4(+) + 2 ATP = carbamoyl phosphate + 2 ADP + phosphate + 2 H(+)</text>
        <dbReference type="Rhea" id="RHEA:18029"/>
        <dbReference type="ChEBI" id="CHEBI:15378"/>
        <dbReference type="ChEBI" id="CHEBI:17544"/>
        <dbReference type="ChEBI" id="CHEBI:28938"/>
        <dbReference type="ChEBI" id="CHEBI:30616"/>
        <dbReference type="ChEBI" id="CHEBI:43474"/>
        <dbReference type="ChEBI" id="CHEBI:58228"/>
        <dbReference type="ChEBI" id="CHEBI:456216"/>
        <dbReference type="EC" id="6.3.4.16"/>
    </reaction>
</comment>
<comment type="cofactor">
    <cofactor evidence="1">
        <name>Mg(2+)</name>
        <dbReference type="ChEBI" id="CHEBI:18420"/>
    </cofactor>
    <cofactor evidence="1">
        <name>Mn(2+)</name>
        <dbReference type="ChEBI" id="CHEBI:29035"/>
    </cofactor>
    <text evidence="1">Binds 4 Mg(2+) or Mn(2+) ions per subunit.</text>
</comment>
<comment type="pathway">
    <text evidence="1">Amino-acid biosynthesis; L-arginine biosynthesis; carbamoyl phosphate from bicarbonate: step 1/1.</text>
</comment>
<comment type="pathway">
    <text evidence="1">Pyrimidine metabolism; UMP biosynthesis via de novo pathway; (S)-dihydroorotate from bicarbonate: step 1/3.</text>
</comment>
<comment type="subunit">
    <text evidence="1">Composed of two chains; the small (or glutamine) chain promotes the hydrolysis of glutamine to ammonia, which is used by the large (or ammonia) chain to synthesize carbamoyl phosphate. Tetramer of heterodimers (alpha,beta)4.</text>
</comment>
<comment type="domain">
    <text evidence="1">The large subunit is composed of 2 ATP-grasp domains that are involved in binding the 2 ATP molecules needed for carbamoyl phosphate synthesis. The N-terminal ATP-grasp domain (referred to as the carboxyphosphate synthetic component) catalyzes the ATP-dependent phosphorylation of hydrogencarbonate to carboxyphosphate and the subsequent nucleophilic attack by ammonia to form a carbamate intermediate. The C-terminal ATP-grasp domain (referred to as the carbamoyl phosphate synthetic component) then catalyzes the phosphorylation of carbamate with the second ATP to form the end product carbamoyl phosphate. The reactive and unstable enzyme intermediates are sequentially channeled from one active site to the next through the interior of the protein over a distance of at least 96 A.</text>
</comment>
<comment type="similarity">
    <text evidence="1">Belongs to the CarB family.</text>
</comment>
<protein>
    <recommendedName>
        <fullName evidence="1">Carbamoyl phosphate synthase large chain</fullName>
        <ecNumber evidence="1">6.3.4.16</ecNumber>
        <ecNumber evidence="1">6.3.5.5</ecNumber>
    </recommendedName>
    <alternativeName>
        <fullName evidence="1">Carbamoyl phosphate synthetase ammonia chain</fullName>
    </alternativeName>
</protein>
<organism>
    <name type="scientific">Corynebacterium glutamicum (strain ATCC 13032 / DSM 20300 / JCM 1318 / BCRC 11384 / CCUG 27702 / LMG 3730 / NBRC 12168 / NCIMB 10025 / NRRL B-2784 / 534)</name>
    <dbReference type="NCBI Taxonomy" id="196627"/>
    <lineage>
        <taxon>Bacteria</taxon>
        <taxon>Bacillati</taxon>
        <taxon>Actinomycetota</taxon>
        <taxon>Actinomycetes</taxon>
        <taxon>Mycobacteriales</taxon>
        <taxon>Corynebacteriaceae</taxon>
        <taxon>Corynebacterium</taxon>
    </lineage>
</organism>
<proteinExistence type="inferred from homology"/>
<name>CARB_CORGL</name>
<reference key="1">
    <citation type="journal article" date="2003" name="Appl. Microbiol. Biotechnol.">
        <title>The Corynebacterium glutamicum genome: features and impacts on biotechnological processes.</title>
        <authorList>
            <person name="Ikeda M."/>
            <person name="Nakagawa S."/>
        </authorList>
    </citation>
    <scope>NUCLEOTIDE SEQUENCE [LARGE SCALE GENOMIC DNA]</scope>
    <source>
        <strain>ATCC 13032 / DSM 20300 / JCM 1318 / BCRC 11384 / CCUG 27702 / LMG 3730 / NBRC 12168 / NCIMB 10025 / NRRL B-2784 / 534</strain>
    </source>
</reference>
<reference key="2">
    <citation type="journal article" date="2003" name="J. Biotechnol.">
        <title>The complete Corynebacterium glutamicum ATCC 13032 genome sequence and its impact on the production of L-aspartate-derived amino acids and vitamins.</title>
        <authorList>
            <person name="Kalinowski J."/>
            <person name="Bathe B."/>
            <person name="Bartels D."/>
            <person name="Bischoff N."/>
            <person name="Bott M."/>
            <person name="Burkovski A."/>
            <person name="Dusch N."/>
            <person name="Eggeling L."/>
            <person name="Eikmanns B.J."/>
            <person name="Gaigalat L."/>
            <person name="Goesmann A."/>
            <person name="Hartmann M."/>
            <person name="Huthmacher K."/>
            <person name="Kraemer R."/>
            <person name="Linke B."/>
            <person name="McHardy A.C."/>
            <person name="Meyer F."/>
            <person name="Moeckel B."/>
            <person name="Pfefferle W."/>
            <person name="Puehler A."/>
            <person name="Rey D.A."/>
            <person name="Rueckert C."/>
            <person name="Rupp O."/>
            <person name="Sahm H."/>
            <person name="Wendisch V.F."/>
            <person name="Wiegraebe I."/>
            <person name="Tauch A."/>
        </authorList>
    </citation>
    <scope>NUCLEOTIDE SEQUENCE [LARGE SCALE GENOMIC DNA]</scope>
    <source>
        <strain>ATCC 13032 / DSM 20300 / JCM 1318 / BCRC 11384 / CCUG 27702 / LMG 3730 / NBRC 12168 / NCIMB 10025 / NRRL B-2784 / 534</strain>
    </source>
</reference>
<keyword id="KW-0028">Amino-acid biosynthesis</keyword>
<keyword id="KW-0055">Arginine biosynthesis</keyword>
<keyword id="KW-0067">ATP-binding</keyword>
<keyword id="KW-0436">Ligase</keyword>
<keyword id="KW-0460">Magnesium</keyword>
<keyword id="KW-0464">Manganese</keyword>
<keyword id="KW-0479">Metal-binding</keyword>
<keyword id="KW-0547">Nucleotide-binding</keyword>
<keyword id="KW-0665">Pyrimidine biosynthesis</keyword>
<keyword id="KW-1185">Reference proteome</keyword>
<keyword id="KW-0677">Repeat</keyword>
<sequence length="1113" mass="120037">MPKRSDINHVLVIGSGPIVIGQACEFDYSGTQACRVLKEEGLRVTLINSNPATIMTDPEMADHTYVEPIEPEYIDKIFAKEIEQGHPIDAVLATLGGQTALNAAIQLDRLGILEKYGVELIGADIDAIERGEDRQKFKDIVTTIGGESARSRVCHNMEEVHETVAELGLPVVVRPSFTMGGLGSGLAYNTEDLERIAGGGLAASPEANVLIEESILGWKEFELELMRDTADNVVVICSIENVDALGVHTGDSVTVAPALTLTDREFQKMRDQGIAIIREVGVDTGGCNIQFAINPVDGRIITIEMNPRVSRSSALASKATGFPIAKMAAKLAIGYTLDEITNDITGETPAAFEPTIDYVVVKAPRFAFEKFVGADDTLTTTMKSVGEVMSLGRNYIAALNKALRSLETKQQGFWTKPDEFFAGERATDKAAVLEDLKRPTEGRLYDVELAMRLGASVEELYEASSIDPWFLAELEALVQFRQKLVDAPFLNEDLLREAKFMGLSDLQIAALRPEFAGEDGVRTLRLSLGIRPVFKTVDTCAAEFEAKTPYHYSAYELDPAAESEVAPQTEREKVLILGSGPNRIGQGIEFDYSCVHAALELSRVGYETVMVNCNPETVSTDYDTADRLYFEPLTFEDVMEVYHAEAQSGTVAGVIVQLGGQTPLGLADRLKKAGVPVIGTSPEAIDMAEDRGEFGALLNREQLPAPAFGTATSFEEARTVADEISYPVLVRPSYVLGGRGMEIVYDEASLEDYINRATELSSDHPVLVDRFLDNAIEIDVDALCDGDEVYLAGVMEHIEEAGIHSGDSACALPPMTLGAQDIEKVREATKKLALGIGVQGLMNVQYALKDDILYVIEANPRASRTVPFVSKATGVNLAKAASRIAVGATIKDLQDEGMIPTEYDGGSLPLDAPIAVKEAVLPFNRFRRPDGKTLDTLLSPEMKSTGEVMGLANNFGAAYAKAEAGAFGALPTEGTVFVTVANRDKRTLILPIQRLALMGYKILATEGTAGMLRRNGIECEVVLKASDIREGVEGKSIVDRIREGEVDLILNTPAGSAGARHDGYDIRAAAVTVGVPLITTVQGVTAAVQGIEALREGVVSVRALQELDHAVKA</sequence>